<dbReference type="EC" id="6.1.1.15" evidence="1"/>
<dbReference type="EMBL" id="CP001172">
    <property type="protein sequence ID" value="ACJ56792.1"/>
    <property type="molecule type" value="Genomic_DNA"/>
</dbReference>
<dbReference type="RefSeq" id="WP_001202759.1">
    <property type="nucleotide sequence ID" value="NZ_CP001172.1"/>
</dbReference>
<dbReference type="SMR" id="B7GWV6"/>
<dbReference type="HOGENOM" id="CLU_016739_0_0_6"/>
<dbReference type="Proteomes" id="UP000006924">
    <property type="component" value="Chromosome"/>
</dbReference>
<dbReference type="GO" id="GO:0005829">
    <property type="term" value="C:cytosol"/>
    <property type="evidence" value="ECO:0007669"/>
    <property type="project" value="TreeGrafter"/>
</dbReference>
<dbReference type="GO" id="GO:0002161">
    <property type="term" value="F:aminoacyl-tRNA deacylase activity"/>
    <property type="evidence" value="ECO:0007669"/>
    <property type="project" value="InterPro"/>
</dbReference>
<dbReference type="GO" id="GO:0005524">
    <property type="term" value="F:ATP binding"/>
    <property type="evidence" value="ECO:0007669"/>
    <property type="project" value="UniProtKB-UniRule"/>
</dbReference>
<dbReference type="GO" id="GO:0004827">
    <property type="term" value="F:proline-tRNA ligase activity"/>
    <property type="evidence" value="ECO:0007669"/>
    <property type="project" value="UniProtKB-UniRule"/>
</dbReference>
<dbReference type="GO" id="GO:0006433">
    <property type="term" value="P:prolyl-tRNA aminoacylation"/>
    <property type="evidence" value="ECO:0007669"/>
    <property type="project" value="UniProtKB-UniRule"/>
</dbReference>
<dbReference type="CDD" id="cd04334">
    <property type="entry name" value="ProRS-INS"/>
    <property type="match status" value="1"/>
</dbReference>
<dbReference type="CDD" id="cd00861">
    <property type="entry name" value="ProRS_anticodon_short"/>
    <property type="match status" value="1"/>
</dbReference>
<dbReference type="CDD" id="cd00779">
    <property type="entry name" value="ProRS_core_prok"/>
    <property type="match status" value="1"/>
</dbReference>
<dbReference type="FunFam" id="3.30.930.10:FF:000043">
    <property type="entry name" value="Proline--tRNA ligase"/>
    <property type="match status" value="1"/>
</dbReference>
<dbReference type="FunFam" id="3.30.930.10:FF:000097">
    <property type="entry name" value="Proline--tRNA ligase"/>
    <property type="match status" value="1"/>
</dbReference>
<dbReference type="Gene3D" id="3.40.50.800">
    <property type="entry name" value="Anticodon-binding domain"/>
    <property type="match status" value="1"/>
</dbReference>
<dbReference type="Gene3D" id="3.30.930.10">
    <property type="entry name" value="Bira Bifunctional Protein, Domain 2"/>
    <property type="match status" value="2"/>
</dbReference>
<dbReference type="HAMAP" id="MF_01569">
    <property type="entry name" value="Pro_tRNA_synth_type1"/>
    <property type="match status" value="1"/>
</dbReference>
<dbReference type="InterPro" id="IPR002314">
    <property type="entry name" value="aa-tRNA-synt_IIb"/>
</dbReference>
<dbReference type="InterPro" id="IPR006195">
    <property type="entry name" value="aa-tRNA-synth_II"/>
</dbReference>
<dbReference type="InterPro" id="IPR045864">
    <property type="entry name" value="aa-tRNA-synth_II/BPL/LPL"/>
</dbReference>
<dbReference type="InterPro" id="IPR004154">
    <property type="entry name" value="Anticodon-bd"/>
</dbReference>
<dbReference type="InterPro" id="IPR036621">
    <property type="entry name" value="Anticodon-bd_dom_sf"/>
</dbReference>
<dbReference type="InterPro" id="IPR002316">
    <property type="entry name" value="Pro-tRNA-ligase_IIa"/>
</dbReference>
<dbReference type="InterPro" id="IPR004500">
    <property type="entry name" value="Pro-tRNA-synth_IIa_bac-type"/>
</dbReference>
<dbReference type="InterPro" id="IPR023717">
    <property type="entry name" value="Pro-tRNA-Synthase_IIa_type1"/>
</dbReference>
<dbReference type="InterPro" id="IPR050062">
    <property type="entry name" value="Pro-tRNA_synthetase"/>
</dbReference>
<dbReference type="InterPro" id="IPR044140">
    <property type="entry name" value="ProRS_anticodon_short"/>
</dbReference>
<dbReference type="InterPro" id="IPR033730">
    <property type="entry name" value="ProRS_core_prok"/>
</dbReference>
<dbReference type="InterPro" id="IPR036754">
    <property type="entry name" value="YbaK/aa-tRNA-synt-asso_dom_sf"/>
</dbReference>
<dbReference type="InterPro" id="IPR007214">
    <property type="entry name" value="YbaK/aa-tRNA-synth-assoc-dom"/>
</dbReference>
<dbReference type="NCBIfam" id="NF006625">
    <property type="entry name" value="PRK09194.1"/>
    <property type="match status" value="1"/>
</dbReference>
<dbReference type="NCBIfam" id="TIGR00409">
    <property type="entry name" value="proS_fam_II"/>
    <property type="match status" value="1"/>
</dbReference>
<dbReference type="PANTHER" id="PTHR42753">
    <property type="entry name" value="MITOCHONDRIAL RIBOSOME PROTEIN L39/PROLYL-TRNA LIGASE FAMILY MEMBER"/>
    <property type="match status" value="1"/>
</dbReference>
<dbReference type="PANTHER" id="PTHR42753:SF2">
    <property type="entry name" value="PROLINE--TRNA LIGASE"/>
    <property type="match status" value="1"/>
</dbReference>
<dbReference type="Pfam" id="PF03129">
    <property type="entry name" value="HGTP_anticodon"/>
    <property type="match status" value="1"/>
</dbReference>
<dbReference type="Pfam" id="PF00587">
    <property type="entry name" value="tRNA-synt_2b"/>
    <property type="match status" value="1"/>
</dbReference>
<dbReference type="Pfam" id="PF04073">
    <property type="entry name" value="tRNA_edit"/>
    <property type="match status" value="1"/>
</dbReference>
<dbReference type="PIRSF" id="PIRSF001535">
    <property type="entry name" value="ProRS_1"/>
    <property type="match status" value="1"/>
</dbReference>
<dbReference type="PRINTS" id="PR01046">
    <property type="entry name" value="TRNASYNTHPRO"/>
</dbReference>
<dbReference type="SUPFAM" id="SSF52954">
    <property type="entry name" value="Class II aaRS ABD-related"/>
    <property type="match status" value="1"/>
</dbReference>
<dbReference type="SUPFAM" id="SSF55681">
    <property type="entry name" value="Class II aaRS and biotin synthetases"/>
    <property type="match status" value="1"/>
</dbReference>
<dbReference type="SUPFAM" id="SSF55826">
    <property type="entry name" value="YbaK/ProRS associated domain"/>
    <property type="match status" value="1"/>
</dbReference>
<dbReference type="PROSITE" id="PS50862">
    <property type="entry name" value="AA_TRNA_LIGASE_II"/>
    <property type="match status" value="1"/>
</dbReference>
<organism>
    <name type="scientific">Acinetobacter baumannii (strain AB307-0294)</name>
    <dbReference type="NCBI Taxonomy" id="557600"/>
    <lineage>
        <taxon>Bacteria</taxon>
        <taxon>Pseudomonadati</taxon>
        <taxon>Pseudomonadota</taxon>
        <taxon>Gammaproteobacteria</taxon>
        <taxon>Moraxellales</taxon>
        <taxon>Moraxellaceae</taxon>
        <taxon>Acinetobacter</taxon>
        <taxon>Acinetobacter calcoaceticus/baumannii complex</taxon>
    </lineage>
</organism>
<name>SYP_ACIB3</name>
<feature type="chain" id="PRO_1000199341" description="Proline--tRNA ligase">
    <location>
        <begin position="1"/>
        <end position="571"/>
    </location>
</feature>
<proteinExistence type="inferred from homology"/>
<sequence>MRASRFLFATLRETPNDAEVISHQLMLRAGMIRKLASGLYTWLPMGTRVLKKVDAIVREEMNRSGAMEVFMPVTQPASLWEESGRYEQYGPELLRFKDRHDNPFVLGPTHEEVITDLARNELKSYKQLPVNFYQIQTKFRDEIRPRFGVMRSREFIMKDAYSFHATQESLQETYDVMYDTYSRIFTRLGLDFRPVQADTGSIGGSASHEFHVLAASGEDDIAFSTESDYAANVEMAEAVLVGERAAPTQEFKLVETPNQKTIADVCQFLNADPKQSVKALLVQGVADEKGNVPVVALFLRGDHELNEIKAEKHPLVAAPLAFATEEQLQAFGLTAGFTGPQGLVEKGITVIVDRAASVLSDFVAGANEADKHAIGVNWERDAQITEVFDLRNVVEGDPSPDGKGTLQIKRGIEVGHIFQLGTKYSEALGCKVLGEDGKPFTVTMGCYGIGVTRVVAAAIEQNYDDKGIIWPQAIAPFEIAIVPMNAHKSPRTLEAAEALYAELQAQGFDVLLDDRNERPGVKFSDLELMGIPHRIVIGEKGLDAGTFEYKGRRDAEASNLTKEELLAKLAR</sequence>
<reference key="1">
    <citation type="journal article" date="2008" name="J. Bacteriol.">
        <title>Comparative genome sequence analysis of multidrug-resistant Acinetobacter baumannii.</title>
        <authorList>
            <person name="Adams M.D."/>
            <person name="Goglin K."/>
            <person name="Molyneaux N."/>
            <person name="Hujer K.M."/>
            <person name="Lavender H."/>
            <person name="Jamison J.J."/>
            <person name="MacDonald I.J."/>
            <person name="Martin K.M."/>
            <person name="Russo T."/>
            <person name="Campagnari A.A."/>
            <person name="Hujer A.M."/>
            <person name="Bonomo R.A."/>
            <person name="Gill S.R."/>
        </authorList>
    </citation>
    <scope>NUCLEOTIDE SEQUENCE [LARGE SCALE GENOMIC DNA]</scope>
    <source>
        <strain>AB307-0294</strain>
    </source>
</reference>
<keyword id="KW-0030">Aminoacyl-tRNA synthetase</keyword>
<keyword id="KW-0067">ATP-binding</keyword>
<keyword id="KW-0963">Cytoplasm</keyword>
<keyword id="KW-0436">Ligase</keyword>
<keyword id="KW-0547">Nucleotide-binding</keyword>
<keyword id="KW-0648">Protein biosynthesis</keyword>
<gene>
    <name evidence="1" type="primary">proS</name>
    <name type="ordered locus">ABBFA_000643</name>
</gene>
<accession>B7GWV6</accession>
<evidence type="ECO:0000255" key="1">
    <source>
        <dbReference type="HAMAP-Rule" id="MF_01569"/>
    </source>
</evidence>
<comment type="function">
    <text evidence="1">Catalyzes the attachment of proline to tRNA(Pro) in a two-step reaction: proline is first activated by ATP to form Pro-AMP and then transferred to the acceptor end of tRNA(Pro). As ProRS can inadvertently accommodate and process non-cognate amino acids such as alanine and cysteine, to avoid such errors it has two additional distinct editing activities against alanine. One activity is designated as 'pretransfer' editing and involves the tRNA(Pro)-independent hydrolysis of activated Ala-AMP. The other activity is designated 'posttransfer' editing and involves deacylation of mischarged Ala-tRNA(Pro). The misacylated Cys-tRNA(Pro) is not edited by ProRS.</text>
</comment>
<comment type="catalytic activity">
    <reaction evidence="1">
        <text>tRNA(Pro) + L-proline + ATP = L-prolyl-tRNA(Pro) + AMP + diphosphate</text>
        <dbReference type="Rhea" id="RHEA:14305"/>
        <dbReference type="Rhea" id="RHEA-COMP:9700"/>
        <dbReference type="Rhea" id="RHEA-COMP:9702"/>
        <dbReference type="ChEBI" id="CHEBI:30616"/>
        <dbReference type="ChEBI" id="CHEBI:33019"/>
        <dbReference type="ChEBI" id="CHEBI:60039"/>
        <dbReference type="ChEBI" id="CHEBI:78442"/>
        <dbReference type="ChEBI" id="CHEBI:78532"/>
        <dbReference type="ChEBI" id="CHEBI:456215"/>
        <dbReference type="EC" id="6.1.1.15"/>
    </reaction>
</comment>
<comment type="subunit">
    <text evidence="1">Homodimer.</text>
</comment>
<comment type="subcellular location">
    <subcellularLocation>
        <location evidence="1">Cytoplasm</location>
    </subcellularLocation>
</comment>
<comment type="domain">
    <text evidence="1">Consists of three domains: the N-terminal catalytic domain, the editing domain and the C-terminal anticodon-binding domain.</text>
</comment>
<comment type="similarity">
    <text evidence="1">Belongs to the class-II aminoacyl-tRNA synthetase family. ProS type 1 subfamily.</text>
</comment>
<protein>
    <recommendedName>
        <fullName evidence="1">Proline--tRNA ligase</fullName>
        <ecNumber evidence="1">6.1.1.15</ecNumber>
    </recommendedName>
    <alternativeName>
        <fullName evidence="1">Prolyl-tRNA synthetase</fullName>
        <shortName evidence="1">ProRS</shortName>
    </alternativeName>
</protein>